<evidence type="ECO:0000255" key="1">
    <source>
        <dbReference type="HAMAP-Rule" id="MF_00023"/>
    </source>
</evidence>
<feature type="chain" id="PRO_1000057211" description="SsrA-binding protein">
    <location>
        <begin position="1"/>
        <end position="160"/>
    </location>
</feature>
<protein>
    <recommendedName>
        <fullName evidence="1">SsrA-binding protein</fullName>
    </recommendedName>
    <alternativeName>
        <fullName evidence="1">Small protein B</fullName>
    </alternativeName>
</protein>
<accession>A7FKS8</accession>
<gene>
    <name evidence="1" type="primary">smpB</name>
    <name type="ordered locus">YpsIP31758_2893</name>
</gene>
<keyword id="KW-0963">Cytoplasm</keyword>
<keyword id="KW-0694">RNA-binding</keyword>
<comment type="function">
    <text evidence="1">Required for rescue of stalled ribosomes mediated by trans-translation. Binds to transfer-messenger RNA (tmRNA), required for stable association of tmRNA with ribosomes. tmRNA and SmpB together mimic tRNA shape, replacing the anticodon stem-loop with SmpB. tmRNA is encoded by the ssrA gene; the 2 termini fold to resemble tRNA(Ala) and it encodes a 'tag peptide', a short internal open reading frame. During trans-translation Ala-aminoacylated tmRNA acts like a tRNA, entering the A-site of stalled ribosomes, displacing the stalled mRNA. The ribosome then switches to translate the ORF on the tmRNA; the nascent peptide is terminated with the 'tag peptide' encoded by the tmRNA and targeted for degradation. The ribosome is freed to recommence translation, which seems to be the essential function of trans-translation.</text>
</comment>
<comment type="subcellular location">
    <subcellularLocation>
        <location evidence="1">Cytoplasm</location>
    </subcellularLocation>
    <text evidence="1">The tmRNA-SmpB complex associates with stalled 70S ribosomes.</text>
</comment>
<comment type="similarity">
    <text evidence="1">Belongs to the SmpB family.</text>
</comment>
<proteinExistence type="inferred from homology"/>
<organism>
    <name type="scientific">Yersinia pseudotuberculosis serotype O:1b (strain IP 31758)</name>
    <dbReference type="NCBI Taxonomy" id="349747"/>
    <lineage>
        <taxon>Bacteria</taxon>
        <taxon>Pseudomonadati</taxon>
        <taxon>Pseudomonadota</taxon>
        <taxon>Gammaproteobacteria</taxon>
        <taxon>Enterobacterales</taxon>
        <taxon>Yersiniaceae</taxon>
        <taxon>Yersinia</taxon>
    </lineage>
</organism>
<dbReference type="EMBL" id="CP000720">
    <property type="protein sequence ID" value="ABS47359.1"/>
    <property type="molecule type" value="Genomic_DNA"/>
</dbReference>
<dbReference type="RefSeq" id="WP_002210714.1">
    <property type="nucleotide sequence ID" value="NC_009708.1"/>
</dbReference>
<dbReference type="SMR" id="A7FKS8"/>
<dbReference type="GeneID" id="57977237"/>
<dbReference type="KEGG" id="ypi:YpsIP31758_2893"/>
<dbReference type="HOGENOM" id="CLU_108953_3_0_6"/>
<dbReference type="Proteomes" id="UP000002412">
    <property type="component" value="Chromosome"/>
</dbReference>
<dbReference type="GO" id="GO:0005829">
    <property type="term" value="C:cytosol"/>
    <property type="evidence" value="ECO:0007669"/>
    <property type="project" value="TreeGrafter"/>
</dbReference>
<dbReference type="GO" id="GO:0003723">
    <property type="term" value="F:RNA binding"/>
    <property type="evidence" value="ECO:0007669"/>
    <property type="project" value="UniProtKB-UniRule"/>
</dbReference>
<dbReference type="GO" id="GO:0070929">
    <property type="term" value="P:trans-translation"/>
    <property type="evidence" value="ECO:0007669"/>
    <property type="project" value="UniProtKB-UniRule"/>
</dbReference>
<dbReference type="CDD" id="cd09294">
    <property type="entry name" value="SmpB"/>
    <property type="match status" value="1"/>
</dbReference>
<dbReference type="Gene3D" id="2.40.280.10">
    <property type="match status" value="1"/>
</dbReference>
<dbReference type="HAMAP" id="MF_00023">
    <property type="entry name" value="SmpB"/>
    <property type="match status" value="1"/>
</dbReference>
<dbReference type="InterPro" id="IPR023620">
    <property type="entry name" value="SmpB"/>
</dbReference>
<dbReference type="InterPro" id="IPR000037">
    <property type="entry name" value="SsrA-bd_prot"/>
</dbReference>
<dbReference type="InterPro" id="IPR020081">
    <property type="entry name" value="SsrA-bd_prot_CS"/>
</dbReference>
<dbReference type="NCBIfam" id="NF003843">
    <property type="entry name" value="PRK05422.1"/>
    <property type="match status" value="1"/>
</dbReference>
<dbReference type="NCBIfam" id="TIGR00086">
    <property type="entry name" value="smpB"/>
    <property type="match status" value="1"/>
</dbReference>
<dbReference type="PANTHER" id="PTHR30308:SF2">
    <property type="entry name" value="SSRA-BINDING PROTEIN"/>
    <property type="match status" value="1"/>
</dbReference>
<dbReference type="PANTHER" id="PTHR30308">
    <property type="entry name" value="TMRNA-BINDING COMPONENT OF TRANS-TRANSLATION TAGGING COMPLEX"/>
    <property type="match status" value="1"/>
</dbReference>
<dbReference type="Pfam" id="PF01668">
    <property type="entry name" value="SmpB"/>
    <property type="match status" value="1"/>
</dbReference>
<dbReference type="SUPFAM" id="SSF74982">
    <property type="entry name" value="Small protein B (SmpB)"/>
    <property type="match status" value="1"/>
</dbReference>
<dbReference type="PROSITE" id="PS01317">
    <property type="entry name" value="SSRP"/>
    <property type="match status" value="1"/>
</dbReference>
<name>SSRP_YERP3</name>
<reference key="1">
    <citation type="journal article" date="2007" name="PLoS Genet.">
        <title>The complete genome sequence of Yersinia pseudotuberculosis IP31758, the causative agent of Far East scarlet-like fever.</title>
        <authorList>
            <person name="Eppinger M."/>
            <person name="Rosovitz M.J."/>
            <person name="Fricke W.F."/>
            <person name="Rasko D.A."/>
            <person name="Kokorina G."/>
            <person name="Fayolle C."/>
            <person name="Lindler L.E."/>
            <person name="Carniel E."/>
            <person name="Ravel J."/>
        </authorList>
    </citation>
    <scope>NUCLEOTIDE SEQUENCE [LARGE SCALE GENOMIC DNA]</scope>
    <source>
        <strain>IP 31758</strain>
    </source>
</reference>
<sequence length="160" mass="18407">MTKKKAYKPGSATIAQNKRARHEYFIEEEFEAGLALQGWEVKSLRAGKANISDSYVMFKNGEAFLFGATITPLNVASTHVVCEPMRTRKLLLNKRELDSLFGRVNREGYTVVALSMYWKNAWVKVKIGVAKGKKDNDKRDDIRDREWKLDKARIMKHANR</sequence>